<feature type="chain" id="PRO_0000208533" description="Putative UDP-N-acetylglucosamine 2-epimerase">
    <location>
        <begin position="1"/>
        <end position="385"/>
    </location>
</feature>
<feature type="sequence conflict" description="In Ref. 2; AAC26022." evidence="2" ref="2">
    <original>T</original>
    <variation>A</variation>
    <location>
        <position position="286"/>
    </location>
</feature>
<keyword id="KW-0963">Cytoplasm</keyword>
<keyword id="KW-0413">Isomerase</keyword>
<keyword id="KW-0448">Lipopolysaccharide biosynthesis</keyword>
<keyword id="KW-1185">Reference proteome</keyword>
<comment type="catalytic activity">
    <reaction>
        <text>UDP-N-acetyl-alpha-D-glucosamine = UDP-N-acetyl-alpha-D-mannosamine</text>
        <dbReference type="Rhea" id="RHEA:17213"/>
        <dbReference type="ChEBI" id="CHEBI:57705"/>
        <dbReference type="ChEBI" id="CHEBI:68623"/>
        <dbReference type="EC" id="5.1.3.14"/>
    </reaction>
</comment>
<comment type="subcellular location">
    <subcellularLocation>
        <location evidence="1">Cytoplasm</location>
    </subcellularLocation>
</comment>
<comment type="similarity">
    <text evidence="2">Belongs to the UDP-N-acetylglucosamine 2-epimerase family.</text>
</comment>
<gene>
    <name type="ordered locus">CA_C2874</name>
</gene>
<name>Y2874_CLOAB</name>
<evidence type="ECO:0000250" key="1"/>
<evidence type="ECO:0000305" key="2"/>
<proteinExistence type="inferred from homology"/>
<accession>P45360</accession>
<accession>Q9R8D0</accession>
<sequence>MKQIKVISIFGTRPEAIKMAPLVRRLNENKNVESKVCVTAQHRQMLDQVLNLFDINPDFDLNIMKTKQTLTGITARVLEGLDKIFADENPDIVLVHGDTTTTFAAALAAFYKKIAVGHVEAGLRTYNKYFPFPEEMNRKLTGAVADLHFAPTLGSKKNLLREAVNEKNIFITGNTVVDAMNHTVEKDYVFENDELNKLDYKNKKVIMVTAHRRENWGKGIENICTALRRIAEENEDVEIVYLVHLNPVVKDVVYNNLNGMKGVHLLPPLDTKETHNLMNKCFMVMTDSGGLQEEAPHLGKPVLVLRDVTERPEAVEAGTVKLVGTDIKKIVDEAYKIMKDEEEYEKMSKAINPYGDGKASDRIVDAILYHFGVLKDRPDEFSPKK</sequence>
<reference key="1">
    <citation type="journal article" date="2001" name="J. Bacteriol.">
        <title>Genome sequence and comparative analysis of the solvent-producing bacterium Clostridium acetobutylicum.</title>
        <authorList>
            <person name="Noelling J."/>
            <person name="Breton G."/>
            <person name="Omelchenko M.V."/>
            <person name="Makarova K.S."/>
            <person name="Zeng Q."/>
            <person name="Gibson R."/>
            <person name="Lee H.M."/>
            <person name="Dubois J."/>
            <person name="Qiu D."/>
            <person name="Hitti J."/>
            <person name="Wolf Y.I."/>
            <person name="Tatusov R.L."/>
            <person name="Sabathe F."/>
            <person name="Doucette-Stamm L.A."/>
            <person name="Soucaille P."/>
            <person name="Daly M.J."/>
            <person name="Bennett G.N."/>
            <person name="Koonin E.V."/>
            <person name="Smith D.R."/>
        </authorList>
    </citation>
    <scope>NUCLEOTIDE SEQUENCE [LARGE SCALE GENOMIC DNA]</scope>
    <source>
        <strain>ATCC 824 / DSM 792 / JCM 1419 / IAM 19013 / LMG 5710 / NBRC 13948 / NRRL B-527 / VKM B-1787 / 2291 / W</strain>
    </source>
</reference>
<reference key="2">
    <citation type="submission" date="1998-06" db="EMBL/GenBank/DDBJ databases">
        <title>Cloning, sequencing, and molecular analysis of two thiolase genes from Clostridium acetobutylicum DSM 792.</title>
        <authorList>
            <person name="Winzer K."/>
            <person name="Lorenz K."/>
            <person name="Duerre P."/>
        </authorList>
    </citation>
    <scope>NUCLEOTIDE SEQUENCE [GENOMIC DNA] OF 144-385</scope>
    <source>
        <strain>ATCC 824 / DSM 792 / JCM 1419 / IAM 19013 / LMG 5710 / NBRC 13948 / NRRL B-527 / VKM B-1787 / 2291 / W</strain>
    </source>
</reference>
<reference key="3">
    <citation type="journal article" date="1995" name="Gene">
        <title>Characterization of an acetyl-CoA C-acetyltransferase (thiolase) gene from Clostridium acetobutylicum ATCC 824.</title>
        <authorList>
            <person name="Stim-Herndon K.P."/>
            <person name="Petersen D.J."/>
            <person name="Bennett G.N."/>
        </authorList>
    </citation>
    <scope>NUCLEOTIDE SEQUENCE [GENOMIC DNA] OF 332-385</scope>
    <source>
        <strain>ATCC 824 / DSM 792 / JCM 1419 / IAM 19013 / LMG 5710 / NBRC 13948 / NRRL B-527 / VKM B-1787 / 2291 / W</strain>
    </source>
</reference>
<organism>
    <name type="scientific">Clostridium acetobutylicum (strain ATCC 824 / DSM 792 / JCM 1419 / IAM 19013 / LMG 5710 / NBRC 13948 / NRRL B-527 / VKM B-1787 / 2291 / W)</name>
    <dbReference type="NCBI Taxonomy" id="272562"/>
    <lineage>
        <taxon>Bacteria</taxon>
        <taxon>Bacillati</taxon>
        <taxon>Bacillota</taxon>
        <taxon>Clostridia</taxon>
        <taxon>Eubacteriales</taxon>
        <taxon>Clostridiaceae</taxon>
        <taxon>Clostridium</taxon>
    </lineage>
</organism>
<protein>
    <recommendedName>
        <fullName>Putative UDP-N-acetylglucosamine 2-epimerase</fullName>
        <ecNumber>5.1.3.14</ecNumber>
    </recommendedName>
    <alternativeName>
        <fullName>UDP-GlcNAc-2-epimerase</fullName>
    </alternativeName>
</protein>
<dbReference type="EC" id="5.1.3.14"/>
<dbReference type="EMBL" id="AE001437">
    <property type="protein sequence ID" value="AAK80817.1"/>
    <property type="molecule type" value="Genomic_DNA"/>
</dbReference>
<dbReference type="EMBL" id="AF072734">
    <property type="protein sequence ID" value="AAC26022.1"/>
    <property type="molecule type" value="Genomic_DNA"/>
</dbReference>
<dbReference type="EMBL" id="U08465">
    <property type="protein sequence ID" value="AAA82723.1"/>
    <property type="molecule type" value="Genomic_DNA"/>
</dbReference>
<dbReference type="PIR" id="F97253">
    <property type="entry name" value="F97253"/>
</dbReference>
<dbReference type="PIR" id="PC4016">
    <property type="entry name" value="PC4016"/>
</dbReference>
<dbReference type="RefSeq" id="NP_349477.1">
    <property type="nucleotide sequence ID" value="NC_003030.1"/>
</dbReference>
<dbReference type="SMR" id="P45360"/>
<dbReference type="STRING" id="272562.CA_C2874"/>
<dbReference type="KEGG" id="cac:CA_C2874"/>
<dbReference type="PATRIC" id="fig|272562.8.peg.3058"/>
<dbReference type="eggNOG" id="COG0381">
    <property type="taxonomic scope" value="Bacteria"/>
</dbReference>
<dbReference type="HOGENOM" id="CLU_041674_1_0_9"/>
<dbReference type="OrthoDB" id="9803238at2"/>
<dbReference type="Proteomes" id="UP000000814">
    <property type="component" value="Chromosome"/>
</dbReference>
<dbReference type="GO" id="GO:0005737">
    <property type="term" value="C:cytoplasm"/>
    <property type="evidence" value="ECO:0007669"/>
    <property type="project" value="UniProtKB-SubCell"/>
</dbReference>
<dbReference type="GO" id="GO:0008761">
    <property type="term" value="F:UDP-N-acetylglucosamine 2-epimerase activity"/>
    <property type="evidence" value="ECO:0007669"/>
    <property type="project" value="UniProtKB-EC"/>
</dbReference>
<dbReference type="GO" id="GO:0009103">
    <property type="term" value="P:lipopolysaccharide biosynthetic process"/>
    <property type="evidence" value="ECO:0007669"/>
    <property type="project" value="UniProtKB-KW"/>
</dbReference>
<dbReference type="CDD" id="cd03786">
    <property type="entry name" value="GTB_UDP-GlcNAc_2-Epimerase"/>
    <property type="match status" value="1"/>
</dbReference>
<dbReference type="FunFam" id="3.40.50.2000:FF:000043">
    <property type="entry name" value="UDP-N-acetylglucosamine 2-epimerase"/>
    <property type="match status" value="1"/>
</dbReference>
<dbReference type="Gene3D" id="3.40.50.2000">
    <property type="entry name" value="Glycogen Phosphorylase B"/>
    <property type="match status" value="2"/>
</dbReference>
<dbReference type="InterPro" id="IPR003331">
    <property type="entry name" value="UDP_GlcNAc_Epimerase_2_dom"/>
</dbReference>
<dbReference type="InterPro" id="IPR029767">
    <property type="entry name" value="WecB-like"/>
</dbReference>
<dbReference type="NCBIfam" id="TIGR00236">
    <property type="entry name" value="wecB"/>
    <property type="match status" value="1"/>
</dbReference>
<dbReference type="PANTHER" id="PTHR43174">
    <property type="entry name" value="UDP-N-ACETYLGLUCOSAMINE 2-EPIMERASE"/>
    <property type="match status" value="1"/>
</dbReference>
<dbReference type="PANTHER" id="PTHR43174:SF2">
    <property type="entry name" value="UDP-N-ACETYLGLUCOSAMINE 2-EPIMERASE"/>
    <property type="match status" value="1"/>
</dbReference>
<dbReference type="Pfam" id="PF02350">
    <property type="entry name" value="Epimerase_2"/>
    <property type="match status" value="1"/>
</dbReference>
<dbReference type="SUPFAM" id="SSF53756">
    <property type="entry name" value="UDP-Glycosyltransferase/glycogen phosphorylase"/>
    <property type="match status" value="1"/>
</dbReference>